<reference key="1">
    <citation type="journal article" date="2005" name="J. Gen. Virol.">
        <title>A novel class of herpesvirus with bivalve hosts.</title>
        <authorList>
            <person name="Davison A.J."/>
            <person name="Trus B.L."/>
            <person name="Cheng N."/>
            <person name="Steven A.C."/>
            <person name="Watson M.S."/>
            <person name="Cunningham C."/>
            <person name="Le Deuff R.M."/>
            <person name="Renault T."/>
        </authorList>
    </citation>
    <scope>NUCLEOTIDE SEQUENCE [LARGE SCALE GENOMIC DNA]</scope>
</reference>
<dbReference type="EMBL" id="AY509253">
    <property type="protein sequence ID" value="AAS00916.1"/>
    <property type="molecule type" value="Genomic_DNA"/>
</dbReference>
<dbReference type="RefSeq" id="YP_024569.1">
    <property type="nucleotide sequence ID" value="NC_005881.2"/>
</dbReference>
<dbReference type="SMR" id="Q6R7J9"/>
<dbReference type="KEGG" id="vg:2948266"/>
<dbReference type="Proteomes" id="UP000007021">
    <property type="component" value="Segment"/>
</dbReference>
<organismHost>
    <name type="scientific">Magallana gigas</name>
    <name type="common">Pacific oyster</name>
    <name type="synonym">Crassostrea gigas</name>
    <dbReference type="NCBI Taxonomy" id="29159"/>
</organismHost>
<organismHost>
    <name type="scientific">Pecten maximus</name>
    <name type="common">King scallop</name>
    <name type="synonym">Pilgrim's clam</name>
    <dbReference type="NCBI Taxonomy" id="6579"/>
</organismHost>
<gene>
    <name type="ORF">ORF24</name>
</gene>
<organism>
    <name type="scientific">Ostreid herpesvirus 1 (isolate France)</name>
    <name type="common">OsHV-1</name>
    <name type="synonym">Pacific oyster herpesvirus</name>
    <dbReference type="NCBI Taxonomy" id="654903"/>
    <lineage>
        <taxon>Viruses</taxon>
        <taxon>Duplodnaviria</taxon>
        <taxon>Heunggongvirae</taxon>
        <taxon>Peploviricota</taxon>
        <taxon>Herviviricetes</taxon>
        <taxon>Herpesvirales</taxon>
        <taxon>Malacoherpesviridae</taxon>
        <taxon>Ostreavirus</taxon>
        <taxon>Ostreavirus ostreidmalaco1</taxon>
        <taxon>Ostreid herpesvirus 1</taxon>
    </lineage>
</organism>
<protein>
    <recommendedName>
        <fullName>Uncharacterized protein ORF24</fullName>
    </recommendedName>
</protein>
<keyword id="KW-1185">Reference proteome</keyword>
<name>Y024_OSHVF</name>
<feature type="chain" id="PRO_0000385055" description="Uncharacterized protein ORF24">
    <location>
        <begin position="1"/>
        <end position="377"/>
    </location>
</feature>
<sequence length="377" mass="43811">MEFIKNLQPNKSYWITCKLSEINHIVHMISKQNHLKTTRYSSECLDDVYDGTSLVFDIDPPIWVFKQMIKDGNLSVSCPDHMKTEEVENIAKIVVSHKDPEEFYCVTINGFSLDGVIKNQMTVVKNGQLKKEDKSRERVVEAAEQFYKNKKIASNETLANETTSKPPLENGVPMYFQPPDIEPFPLKNRVPTDTDEKKDFFRGLVQGIFKDYINGIEGAMNDMKNSLPIFLAILTQEDERDKKDYAGTFWVGCRDKFVRFITHGSVNVLRHCNLKREHLAVAMFNSNMSYRPPVIRDMIINDIIHDNPHVYKDIPPWNVSVEVNKFLSRYSAANELEIDRRWNKKYTAKPRQGQKRKADVNDEDGYRRIQKSFEGLF</sequence>
<proteinExistence type="predicted"/>
<accession>Q6R7J9</accession>